<name>ATPE_CITBB</name>
<sequence length="138" mass="15239">MAEKLKVELVTPYKKVLSEEVDEITATGALGEFGVLPGHAPFLTSLKIGELAYRKDGVSHHMALNWGYFEVENDTVTVLVETAEKADEIDLERAKAALGRAETELKGLTPEDKNFRIYEAALERALIRVQVAGKAARR</sequence>
<keyword id="KW-0066">ATP synthesis</keyword>
<keyword id="KW-0997">Cell inner membrane</keyword>
<keyword id="KW-1003">Cell membrane</keyword>
<keyword id="KW-0139">CF(1)</keyword>
<keyword id="KW-0375">Hydrogen ion transport</keyword>
<keyword id="KW-0406">Ion transport</keyword>
<keyword id="KW-0472">Membrane</keyword>
<keyword id="KW-1185">Reference proteome</keyword>
<keyword id="KW-0813">Transport</keyword>
<gene>
    <name evidence="1" type="primary">atpC</name>
    <name type="ordered locus">Gbem_3949</name>
</gene>
<feature type="chain" id="PRO_1000127860" description="ATP synthase epsilon chain">
    <location>
        <begin position="1"/>
        <end position="138"/>
    </location>
</feature>
<dbReference type="EMBL" id="CP001124">
    <property type="protein sequence ID" value="ACH40941.1"/>
    <property type="molecule type" value="Genomic_DNA"/>
</dbReference>
<dbReference type="RefSeq" id="WP_012532375.1">
    <property type="nucleotide sequence ID" value="NC_011146.1"/>
</dbReference>
<dbReference type="SMR" id="B5EFI6"/>
<dbReference type="STRING" id="404380.Gbem_3949"/>
<dbReference type="KEGG" id="gbm:Gbem_3949"/>
<dbReference type="eggNOG" id="COG0355">
    <property type="taxonomic scope" value="Bacteria"/>
</dbReference>
<dbReference type="HOGENOM" id="CLU_084338_1_3_7"/>
<dbReference type="OrthoDB" id="9799969at2"/>
<dbReference type="Proteomes" id="UP000008825">
    <property type="component" value="Chromosome"/>
</dbReference>
<dbReference type="GO" id="GO:0005886">
    <property type="term" value="C:plasma membrane"/>
    <property type="evidence" value="ECO:0007669"/>
    <property type="project" value="UniProtKB-SubCell"/>
</dbReference>
<dbReference type="GO" id="GO:0045259">
    <property type="term" value="C:proton-transporting ATP synthase complex"/>
    <property type="evidence" value="ECO:0007669"/>
    <property type="project" value="UniProtKB-KW"/>
</dbReference>
<dbReference type="GO" id="GO:0005524">
    <property type="term" value="F:ATP binding"/>
    <property type="evidence" value="ECO:0007669"/>
    <property type="project" value="UniProtKB-UniRule"/>
</dbReference>
<dbReference type="GO" id="GO:0046933">
    <property type="term" value="F:proton-transporting ATP synthase activity, rotational mechanism"/>
    <property type="evidence" value="ECO:0007669"/>
    <property type="project" value="UniProtKB-UniRule"/>
</dbReference>
<dbReference type="CDD" id="cd12152">
    <property type="entry name" value="F1-ATPase_delta"/>
    <property type="match status" value="1"/>
</dbReference>
<dbReference type="FunFam" id="2.60.15.10:FF:000001">
    <property type="entry name" value="ATP synthase epsilon chain"/>
    <property type="match status" value="1"/>
</dbReference>
<dbReference type="Gene3D" id="1.20.5.440">
    <property type="entry name" value="ATP synthase delta/epsilon subunit, C-terminal domain"/>
    <property type="match status" value="1"/>
</dbReference>
<dbReference type="Gene3D" id="2.60.15.10">
    <property type="entry name" value="F0F1 ATP synthase delta/epsilon subunit, N-terminal"/>
    <property type="match status" value="1"/>
</dbReference>
<dbReference type="HAMAP" id="MF_00530">
    <property type="entry name" value="ATP_synth_epsil_bac"/>
    <property type="match status" value="1"/>
</dbReference>
<dbReference type="InterPro" id="IPR001469">
    <property type="entry name" value="ATP_synth_F1_dsu/esu"/>
</dbReference>
<dbReference type="InterPro" id="IPR020546">
    <property type="entry name" value="ATP_synth_F1_dsu/esu_N"/>
</dbReference>
<dbReference type="InterPro" id="IPR020547">
    <property type="entry name" value="ATP_synth_F1_esu_C"/>
</dbReference>
<dbReference type="InterPro" id="IPR036771">
    <property type="entry name" value="ATPsynth_dsu/esu_N"/>
</dbReference>
<dbReference type="NCBIfam" id="TIGR01216">
    <property type="entry name" value="ATP_synt_epsi"/>
    <property type="match status" value="1"/>
</dbReference>
<dbReference type="NCBIfam" id="NF009980">
    <property type="entry name" value="PRK13446.1"/>
    <property type="match status" value="1"/>
</dbReference>
<dbReference type="PANTHER" id="PTHR13822">
    <property type="entry name" value="ATP SYNTHASE DELTA/EPSILON CHAIN"/>
    <property type="match status" value="1"/>
</dbReference>
<dbReference type="PANTHER" id="PTHR13822:SF10">
    <property type="entry name" value="ATP SYNTHASE EPSILON CHAIN, CHLOROPLASTIC"/>
    <property type="match status" value="1"/>
</dbReference>
<dbReference type="Pfam" id="PF00401">
    <property type="entry name" value="ATP-synt_DE"/>
    <property type="match status" value="1"/>
</dbReference>
<dbReference type="Pfam" id="PF02823">
    <property type="entry name" value="ATP-synt_DE_N"/>
    <property type="match status" value="1"/>
</dbReference>
<dbReference type="SUPFAM" id="SSF51344">
    <property type="entry name" value="Epsilon subunit of F1F0-ATP synthase N-terminal domain"/>
    <property type="match status" value="1"/>
</dbReference>
<reference key="1">
    <citation type="submission" date="2008-07" db="EMBL/GenBank/DDBJ databases">
        <title>Complete sequence of Geobacter bemidjiensis BEM.</title>
        <authorList>
            <consortium name="US DOE Joint Genome Institute"/>
            <person name="Lucas S."/>
            <person name="Copeland A."/>
            <person name="Lapidus A."/>
            <person name="Glavina del Rio T."/>
            <person name="Dalin E."/>
            <person name="Tice H."/>
            <person name="Bruce D."/>
            <person name="Goodwin L."/>
            <person name="Pitluck S."/>
            <person name="Kiss H."/>
            <person name="Brettin T."/>
            <person name="Detter J.C."/>
            <person name="Han C."/>
            <person name="Kuske C.R."/>
            <person name="Schmutz J."/>
            <person name="Larimer F."/>
            <person name="Land M."/>
            <person name="Hauser L."/>
            <person name="Kyrpides N."/>
            <person name="Lykidis A."/>
            <person name="Lovley D."/>
            <person name="Richardson P."/>
        </authorList>
    </citation>
    <scope>NUCLEOTIDE SEQUENCE [LARGE SCALE GENOMIC DNA]</scope>
    <source>
        <strain>ATCC BAA-1014 / DSM 16622 / JCM 12645 / Bem</strain>
    </source>
</reference>
<organism>
    <name type="scientific">Citrifermentans bemidjiense (strain ATCC BAA-1014 / DSM 16622 / JCM 12645 / Bem)</name>
    <name type="common">Geobacter bemidjiensis</name>
    <dbReference type="NCBI Taxonomy" id="404380"/>
    <lineage>
        <taxon>Bacteria</taxon>
        <taxon>Pseudomonadati</taxon>
        <taxon>Thermodesulfobacteriota</taxon>
        <taxon>Desulfuromonadia</taxon>
        <taxon>Geobacterales</taxon>
        <taxon>Geobacteraceae</taxon>
        <taxon>Citrifermentans</taxon>
    </lineage>
</organism>
<protein>
    <recommendedName>
        <fullName evidence="1">ATP synthase epsilon chain</fullName>
    </recommendedName>
    <alternativeName>
        <fullName evidence="1">ATP synthase F1 sector epsilon subunit</fullName>
    </alternativeName>
    <alternativeName>
        <fullName evidence="1">F-ATPase epsilon subunit</fullName>
    </alternativeName>
</protein>
<proteinExistence type="inferred from homology"/>
<evidence type="ECO:0000255" key="1">
    <source>
        <dbReference type="HAMAP-Rule" id="MF_00530"/>
    </source>
</evidence>
<accession>B5EFI6</accession>
<comment type="function">
    <text evidence="1">Produces ATP from ADP in the presence of a proton gradient across the membrane.</text>
</comment>
<comment type="subunit">
    <text evidence="1">F-type ATPases have 2 components, CF(1) - the catalytic core - and CF(0) - the membrane proton channel. CF(1) has five subunits: alpha(3), beta(3), gamma(1), delta(1), epsilon(1). CF(0) has three main subunits: a, b and c.</text>
</comment>
<comment type="subcellular location">
    <subcellularLocation>
        <location evidence="1">Cell inner membrane</location>
        <topology evidence="1">Peripheral membrane protein</topology>
    </subcellularLocation>
</comment>
<comment type="similarity">
    <text evidence="1">Belongs to the ATPase epsilon chain family.</text>
</comment>